<proteinExistence type="evidence at protein level"/>
<sequence length="249" mass="26757">MAPSRKFFVGGNWKMNGRKKNLGELITTLNAAKVPADTEVVCAPPTAYIDFARQKLDPKIAVAAQNCYKVTNGAFTGEISPGMIKDCGATWVVLGHSERRHVFGESDELIGQKVAHALSEGLGVIACIGEKLDEREAGITEKVVFEQTKVIADNVKDWSKVVLAYEPVWAIGTGKTATPQQAQEVHEKLRGWLKSNVSDAVAQSTRIIYGGSVTGATCKELASQPDVDGFLVGGASLKPEFVDIINAKQ</sequence>
<reference key="1">
    <citation type="journal article" date="2011" name="Nature">
        <title>A high-resolution map of human evolutionary constraint using 29 mammals.</title>
        <authorList>
            <person name="Lindblad-Toh K."/>
            <person name="Garber M."/>
            <person name="Zuk O."/>
            <person name="Lin M.F."/>
            <person name="Parker B.J."/>
            <person name="Washietl S."/>
            <person name="Kheradpour P."/>
            <person name="Ernst J."/>
            <person name="Jordan G."/>
            <person name="Mauceli E."/>
            <person name="Ward L.D."/>
            <person name="Lowe C.B."/>
            <person name="Holloway A.K."/>
            <person name="Clamp M."/>
            <person name="Gnerre S."/>
            <person name="Alfoldi J."/>
            <person name="Beal K."/>
            <person name="Chang J."/>
            <person name="Clawson H."/>
            <person name="Cuff J."/>
            <person name="Di Palma F."/>
            <person name="Fitzgerald S."/>
            <person name="Flicek P."/>
            <person name="Guttman M."/>
            <person name="Hubisz M.J."/>
            <person name="Jaffe D.B."/>
            <person name="Jungreis I."/>
            <person name="Kent W.J."/>
            <person name="Kostka D."/>
            <person name="Lara M."/>
            <person name="Martins A.L."/>
            <person name="Massingham T."/>
            <person name="Moltke I."/>
            <person name="Raney B.J."/>
            <person name="Rasmussen M.D."/>
            <person name="Robinson J."/>
            <person name="Stark A."/>
            <person name="Vilella A.J."/>
            <person name="Wen J."/>
            <person name="Xie X."/>
            <person name="Zody M.C."/>
            <person name="Baldwin J."/>
            <person name="Bloom T."/>
            <person name="Chin C.W."/>
            <person name="Heiman D."/>
            <person name="Nicol R."/>
            <person name="Nusbaum C."/>
            <person name="Young S."/>
            <person name="Wilkinson J."/>
            <person name="Worley K.C."/>
            <person name="Kovar C.L."/>
            <person name="Muzny D.M."/>
            <person name="Gibbs R.A."/>
            <person name="Cree A."/>
            <person name="Dihn H.H."/>
            <person name="Fowler G."/>
            <person name="Jhangiani S."/>
            <person name="Joshi V."/>
            <person name="Lee S."/>
            <person name="Lewis L.R."/>
            <person name="Nazareth L.V."/>
            <person name="Okwuonu G."/>
            <person name="Santibanez J."/>
            <person name="Warren W.C."/>
            <person name="Mardis E.R."/>
            <person name="Weinstock G.M."/>
            <person name="Wilson R.K."/>
            <person name="Delehaunty K."/>
            <person name="Dooling D."/>
            <person name="Fronik C."/>
            <person name="Fulton L."/>
            <person name="Fulton B."/>
            <person name="Graves T."/>
            <person name="Minx P."/>
            <person name="Sodergren E."/>
            <person name="Birney E."/>
            <person name="Margulies E.H."/>
            <person name="Herrero J."/>
            <person name="Green E.D."/>
            <person name="Haussler D."/>
            <person name="Siepel A."/>
            <person name="Goldman N."/>
            <person name="Pollard K.S."/>
            <person name="Pedersen J.S."/>
            <person name="Lander E.S."/>
            <person name="Kellis M."/>
        </authorList>
    </citation>
    <scope>NUCLEOTIDE SEQUENCE [LARGE SCALE GENOMIC DNA]</scope>
    <source>
        <strain>Thorbecke</strain>
    </source>
</reference>
<reference key="2">
    <citation type="journal article" date="1975" name="Biochem. J.">
        <title>The amino acid sequence of rabbit muscle triose phosphate isomerase.</title>
        <authorList>
            <person name="Corran P.H."/>
            <person name="Waley S.G."/>
        </authorList>
    </citation>
    <scope>PROTEIN SEQUENCE OF 2-249</scope>
</reference>
<reference key="3">
    <citation type="journal article" date="1983" name="Nature">
        <title>A new troponin T and cDNA clones for 13 different muscle proteins, found by shotgun sequencing.</title>
        <authorList>
            <person name="Putney S.D."/>
            <person name="Herlihy W.C."/>
            <person name="Schimmel P.R."/>
        </authorList>
    </citation>
    <scope>NUCLEOTIDE SEQUENCE [MRNA] OF 57-84</scope>
</reference>
<reference key="4">
    <citation type="journal article" date="1971" name="Biochemistry">
        <title>Haloacetol phosphates. Characterization of the active site of rabbit muscle triose phosphate isomerase.</title>
        <authorList>
            <person name="Hartman F.C."/>
        </authorList>
    </citation>
    <scope>ACTIVE SITE</scope>
</reference>
<reference key="5">
    <citation type="journal article" date="1991" name="Biochemistry">
        <title>Kinetic parameters for the elimination reaction catalyzed by triosephosphate isomerase and an estimation of the reaction's physiological significance.</title>
        <authorList>
            <person name="Richard J.P."/>
        </authorList>
    </citation>
    <scope>FUNCTION</scope>
    <scope>CATALYTIC ACTIVITY</scope>
    <scope>BIOPHYSICOCHEMICAL PROPERTIES</scope>
</reference>
<reference key="6">
    <citation type="journal article" date="1995" name="Arch. Biochem. Biophys.">
        <title>Terminal marking of triosephosphate isomerase: consequences of deamidation.</title>
        <authorList>
            <person name="Sun A.-Q."/>
            <person name="Yueksel U."/>
            <person name="Gracy R.W."/>
        </authorList>
    </citation>
    <scope>PARTIAL PROTEIN SEQUENCE</scope>
    <scope>DEAMIDATION AT ASN-16 AND ASN-72</scope>
</reference>
<reference key="7">
    <citation type="journal article" date="2003" name="J. Mol. Biol.">
        <title>Closed conformation of the active site loop of rabbit muscle triosephosphate isomerase in the absence of substrate: evidence of conformational heterogeneity.</title>
        <authorList>
            <person name="Aparicio R."/>
            <person name="Ferreira S.T."/>
            <person name="Polikarpov I."/>
        </authorList>
    </citation>
    <scope>X-RAY CRYSTALLOGRAPHY (1.5 ANGSTROMS) OF 2-249</scope>
    <scope>HOMODIMERIZATION</scope>
</reference>
<organism>
    <name type="scientific">Oryctolagus cuniculus</name>
    <name type="common">Rabbit</name>
    <dbReference type="NCBI Taxonomy" id="9986"/>
    <lineage>
        <taxon>Eukaryota</taxon>
        <taxon>Metazoa</taxon>
        <taxon>Chordata</taxon>
        <taxon>Craniata</taxon>
        <taxon>Vertebrata</taxon>
        <taxon>Euteleostomi</taxon>
        <taxon>Mammalia</taxon>
        <taxon>Eutheria</taxon>
        <taxon>Euarchontoglires</taxon>
        <taxon>Glires</taxon>
        <taxon>Lagomorpha</taxon>
        <taxon>Leporidae</taxon>
        <taxon>Oryctolagus</taxon>
    </lineage>
</organism>
<comment type="function">
    <text evidence="10">Triosephosphate isomerase is an extremely efficient metabolic enzyme that catalyzes the interconversion between dihydroxyacetone phosphate (DHAP) and D-glyceraldehyde-3-phosphate (G3P) in glycolysis and gluconeogenesis.</text>
</comment>
<comment type="function">
    <text evidence="6">It is also responsible for the non-negligible production of methylglyoxal a reactive cytotoxic side-product that modifies and can alter proteins, DNA and lipids.</text>
</comment>
<comment type="catalytic activity">
    <reaction evidence="6">
        <text>D-glyceraldehyde 3-phosphate = dihydroxyacetone phosphate</text>
        <dbReference type="Rhea" id="RHEA:18585"/>
        <dbReference type="ChEBI" id="CHEBI:57642"/>
        <dbReference type="ChEBI" id="CHEBI:59776"/>
        <dbReference type="EC" id="5.3.1.1"/>
    </reaction>
</comment>
<comment type="catalytic activity">
    <reaction evidence="6">
        <text>dihydroxyacetone phosphate = methylglyoxal + phosphate</text>
        <dbReference type="Rhea" id="RHEA:17937"/>
        <dbReference type="ChEBI" id="CHEBI:17158"/>
        <dbReference type="ChEBI" id="CHEBI:43474"/>
        <dbReference type="ChEBI" id="CHEBI:57642"/>
        <dbReference type="EC" id="4.2.3.3"/>
    </reaction>
</comment>
<comment type="biophysicochemical properties">
    <kinetics>
        <KM evidence="6">0.62 mM for dihydroxyacetone phosphate (at pH 7.9)</KM>
        <text evidence="6">The kcat is 900 sec(-1) for the isomerization of dihydroxyacetone phosphate (PubMed:2021650). The kcat is 0.011 sec(-1) for the production of methylglyoxal via the elimination reaction (PubMed:2021650). Produces methylglyoxal with a calculated cellular velocity of 0.4 mM per day (PubMed:2021650).</text>
    </kinetics>
</comment>
<comment type="pathway">
    <text evidence="4">Carbohydrate degradation; glycolysis; D-glyceraldehyde 3-phosphate from glycerone phosphate: step 1/1.</text>
</comment>
<comment type="pathway">
    <text evidence="4">Carbohydrate biosynthesis; gluconeogenesis.</text>
</comment>
<comment type="subunit">
    <text evidence="4 5">Homodimer.</text>
</comment>
<comment type="subcellular location">
    <subcellularLocation>
        <location evidence="4">Cytoplasm</location>
    </subcellularLocation>
</comment>
<comment type="alternative products">
    <event type="alternative initiation"/>
    <isoform>
        <id>P00939-1</id>
        <name>1</name>
        <sequence type="displayed"/>
    </isoform>
    <isoform>
        <id>P00939-2</id>
        <name>2</name>
        <sequence type="described" ref="VSP_060725"/>
    </isoform>
</comment>
<comment type="PTM">
    <text evidence="8">Asn-16 and Asn-72 undergo deamidation which gives rise to four extra negative charges. These are expected to decrease subunit-subunit interactions and so expose the hydrophobic interface to the aqueous environment.</text>
</comment>
<comment type="similarity">
    <text evidence="9">Belongs to the triosephosphate isomerase family.</text>
</comment>
<accession>P00939</accession>
<accession>G1TS29</accession>
<protein>
    <recommendedName>
        <fullName evidence="10">Triosephosphate isomerase</fullName>
        <shortName>TIM</shortName>
        <ecNumber evidence="6">5.3.1.1</ecNumber>
    </recommendedName>
    <alternativeName>
        <fullName evidence="10">Methylglyoxal synthase</fullName>
        <ecNumber evidence="6">4.2.3.3</ecNumber>
    </alternativeName>
    <alternativeName>
        <fullName>Triose-phosphate isomerase</fullName>
    </alternativeName>
</protein>
<name>TPIS_RABIT</name>
<dbReference type="EC" id="5.3.1.1" evidence="6"/>
<dbReference type="EC" id="4.2.3.3" evidence="6"/>
<dbReference type="EMBL" id="AAGW02051581">
    <property type="status" value="NOT_ANNOTATED_CDS"/>
    <property type="molecule type" value="Genomic_DNA"/>
</dbReference>
<dbReference type="EMBL" id="V00902">
    <property type="protein sequence ID" value="CAA24267.1"/>
    <property type="molecule type" value="mRNA"/>
</dbReference>
<dbReference type="PIR" id="A01165">
    <property type="entry name" value="ISRBT"/>
</dbReference>
<dbReference type="RefSeq" id="XP_002712957.1">
    <molecule id="P00939-2"/>
    <property type="nucleotide sequence ID" value="XM_002712911.4"/>
</dbReference>
<dbReference type="PDB" id="1R2R">
    <property type="method" value="X-ray"/>
    <property type="resolution" value="1.50 A"/>
    <property type="chains" value="A/B/C/D=2-249"/>
</dbReference>
<dbReference type="PDB" id="1R2S">
    <property type="method" value="X-ray"/>
    <property type="resolution" value="2.85 A"/>
    <property type="chains" value="A/B/C/D=2-249"/>
</dbReference>
<dbReference type="PDB" id="1R2T">
    <property type="method" value="X-ray"/>
    <property type="resolution" value="2.25 A"/>
    <property type="chains" value="A/B=2-249"/>
</dbReference>
<dbReference type="PDB" id="4OWG">
    <property type="method" value="X-ray"/>
    <property type="resolution" value="1.55 A"/>
    <property type="chains" value="A/B=2-249"/>
</dbReference>
<dbReference type="PDBsum" id="1R2R"/>
<dbReference type="PDBsum" id="1R2S"/>
<dbReference type="PDBsum" id="1R2T"/>
<dbReference type="PDBsum" id="4OWG"/>
<dbReference type="SMR" id="P00939"/>
<dbReference type="FunCoup" id="P00939">
    <property type="interactions" value="1205"/>
</dbReference>
<dbReference type="STRING" id="9986.ENSOCUP00000019840"/>
<dbReference type="BindingDB" id="P00939"/>
<dbReference type="ChEMBL" id="CHEMBL3930"/>
<dbReference type="PaxDb" id="9986-ENSOCUP00000019840"/>
<dbReference type="Ensembl" id="ENSOCUT00000025399.1">
    <molecule id="P00939-2"/>
    <property type="protein sequence ID" value="ENSOCUP00000019840.1"/>
    <property type="gene ID" value="ENSOCUG00000025649.1"/>
</dbReference>
<dbReference type="GeneID" id="100348316"/>
<dbReference type="KEGG" id="ocu:100348316"/>
<dbReference type="CTD" id="7167"/>
<dbReference type="eggNOG" id="KOG1643">
    <property type="taxonomic scope" value="Eukaryota"/>
</dbReference>
<dbReference type="GeneTree" id="ENSGT00390000013354"/>
<dbReference type="HOGENOM" id="CLU_024251_2_0_1"/>
<dbReference type="InParanoid" id="P00939"/>
<dbReference type="OMA" id="NWKMHMT"/>
<dbReference type="OrthoDB" id="6715177at2759"/>
<dbReference type="TreeFam" id="TF300829"/>
<dbReference type="BRENDA" id="5.3.1.1">
    <property type="organism ID" value="1749"/>
</dbReference>
<dbReference type="SABIO-RK" id="P00939"/>
<dbReference type="UniPathway" id="UPA00109">
    <property type="reaction ID" value="UER00189"/>
</dbReference>
<dbReference type="UniPathway" id="UPA00138"/>
<dbReference type="EvolutionaryTrace" id="P00939"/>
<dbReference type="Proteomes" id="UP000001811">
    <property type="component" value="Chromosome 8"/>
</dbReference>
<dbReference type="Bgee" id="ENSOCUG00000025649">
    <property type="expression patterns" value="Expressed in skeletal muscle tissue and 18 other cell types or tissues"/>
</dbReference>
<dbReference type="GO" id="GO:0005829">
    <property type="term" value="C:cytosol"/>
    <property type="evidence" value="ECO:0007669"/>
    <property type="project" value="Ensembl"/>
</dbReference>
<dbReference type="GO" id="GO:0008929">
    <property type="term" value="F:methylglyoxal synthase activity"/>
    <property type="evidence" value="ECO:0000314"/>
    <property type="project" value="UniProtKB"/>
</dbReference>
<dbReference type="GO" id="GO:0042803">
    <property type="term" value="F:protein homodimerization activity"/>
    <property type="evidence" value="ECO:0000250"/>
    <property type="project" value="UniProtKB"/>
</dbReference>
<dbReference type="GO" id="GO:0004807">
    <property type="term" value="F:triose-phosphate isomerase activity"/>
    <property type="evidence" value="ECO:0000314"/>
    <property type="project" value="UniProtKB"/>
</dbReference>
<dbReference type="GO" id="GO:0031625">
    <property type="term" value="F:ubiquitin protein ligase binding"/>
    <property type="evidence" value="ECO:0007669"/>
    <property type="project" value="Ensembl"/>
</dbReference>
<dbReference type="GO" id="GO:0061621">
    <property type="term" value="P:canonical glycolysis"/>
    <property type="evidence" value="ECO:0007669"/>
    <property type="project" value="Ensembl"/>
</dbReference>
<dbReference type="GO" id="GO:0006094">
    <property type="term" value="P:gluconeogenesis"/>
    <property type="evidence" value="ECO:0007669"/>
    <property type="project" value="UniProtKB-UniPathway"/>
</dbReference>
<dbReference type="GO" id="GO:0046166">
    <property type="term" value="P:glyceraldehyde-3-phosphate biosynthetic process"/>
    <property type="evidence" value="ECO:0000314"/>
    <property type="project" value="UniProtKB"/>
</dbReference>
<dbReference type="GO" id="GO:0019563">
    <property type="term" value="P:glycerol catabolic process"/>
    <property type="evidence" value="ECO:0007669"/>
    <property type="project" value="TreeGrafter"/>
</dbReference>
<dbReference type="GO" id="GO:0019242">
    <property type="term" value="P:methylglyoxal biosynthetic process"/>
    <property type="evidence" value="ECO:0000314"/>
    <property type="project" value="UniProtKB"/>
</dbReference>
<dbReference type="CDD" id="cd00311">
    <property type="entry name" value="TIM"/>
    <property type="match status" value="1"/>
</dbReference>
<dbReference type="FunFam" id="3.20.20.70:FF:000025">
    <property type="entry name" value="Triosephosphate isomerase"/>
    <property type="match status" value="1"/>
</dbReference>
<dbReference type="Gene3D" id="3.20.20.70">
    <property type="entry name" value="Aldolase class I"/>
    <property type="match status" value="1"/>
</dbReference>
<dbReference type="HAMAP" id="MF_00147_B">
    <property type="entry name" value="TIM_B"/>
    <property type="match status" value="1"/>
</dbReference>
<dbReference type="InterPro" id="IPR013785">
    <property type="entry name" value="Aldolase_TIM"/>
</dbReference>
<dbReference type="InterPro" id="IPR035990">
    <property type="entry name" value="TIM_sf"/>
</dbReference>
<dbReference type="InterPro" id="IPR022896">
    <property type="entry name" value="TrioseP_Isoase_bac/euk"/>
</dbReference>
<dbReference type="InterPro" id="IPR000652">
    <property type="entry name" value="Triosephosphate_isomerase"/>
</dbReference>
<dbReference type="InterPro" id="IPR020861">
    <property type="entry name" value="Triosephosphate_isomerase_AS"/>
</dbReference>
<dbReference type="NCBIfam" id="TIGR00419">
    <property type="entry name" value="tim"/>
    <property type="match status" value="1"/>
</dbReference>
<dbReference type="PANTHER" id="PTHR21139">
    <property type="entry name" value="TRIOSEPHOSPHATE ISOMERASE"/>
    <property type="match status" value="1"/>
</dbReference>
<dbReference type="PANTHER" id="PTHR21139:SF2">
    <property type="entry name" value="TRIOSEPHOSPHATE ISOMERASE"/>
    <property type="match status" value="1"/>
</dbReference>
<dbReference type="Pfam" id="PF00121">
    <property type="entry name" value="TIM"/>
    <property type="match status" value="1"/>
</dbReference>
<dbReference type="SUPFAM" id="SSF51351">
    <property type="entry name" value="Triosephosphate isomerase (TIM)"/>
    <property type="match status" value="1"/>
</dbReference>
<dbReference type="PROSITE" id="PS00171">
    <property type="entry name" value="TIM_1"/>
    <property type="match status" value="1"/>
</dbReference>
<dbReference type="PROSITE" id="PS51440">
    <property type="entry name" value="TIM_2"/>
    <property type="match status" value="1"/>
</dbReference>
<evidence type="ECO:0000250" key="1">
    <source>
        <dbReference type="UniProtKB" id="P17751"/>
    </source>
</evidence>
<evidence type="ECO:0000250" key="2">
    <source>
        <dbReference type="UniProtKB" id="P48500"/>
    </source>
</evidence>
<evidence type="ECO:0000250" key="3">
    <source>
        <dbReference type="UniProtKB" id="P60174"/>
    </source>
</evidence>
<evidence type="ECO:0000255" key="4">
    <source>
        <dbReference type="PROSITE-ProRule" id="PRU10127"/>
    </source>
</evidence>
<evidence type="ECO:0000269" key="5">
    <source>
    </source>
</evidence>
<evidence type="ECO:0000269" key="6">
    <source>
    </source>
</evidence>
<evidence type="ECO:0000269" key="7">
    <source>
    </source>
</evidence>
<evidence type="ECO:0000269" key="8">
    <source>
    </source>
</evidence>
<evidence type="ECO:0000305" key="9"/>
<evidence type="ECO:0000305" key="10">
    <source>
    </source>
</evidence>
<evidence type="ECO:0007829" key="11">
    <source>
        <dbReference type="PDB" id="1R2R"/>
    </source>
</evidence>
<evidence type="ECO:0007829" key="12">
    <source>
        <dbReference type="PDB" id="4OWG"/>
    </source>
</evidence>
<gene>
    <name type="primary">TPI1</name>
</gene>
<keyword id="KW-0002">3D-structure</keyword>
<keyword id="KW-0007">Acetylation</keyword>
<keyword id="KW-0024">Alternative initiation</keyword>
<keyword id="KW-0963">Cytoplasm</keyword>
<keyword id="KW-0903">Direct protein sequencing</keyword>
<keyword id="KW-0312">Gluconeogenesis</keyword>
<keyword id="KW-0324">Glycolysis</keyword>
<keyword id="KW-0413">Isomerase</keyword>
<keyword id="KW-1017">Isopeptide bond</keyword>
<keyword id="KW-0456">Lyase</keyword>
<keyword id="KW-0488">Methylation</keyword>
<keyword id="KW-0944">Nitration</keyword>
<keyword id="KW-0597">Phosphoprotein</keyword>
<keyword id="KW-1185">Reference proteome</keyword>
<keyword id="KW-0832">Ubl conjugation</keyword>
<feature type="initiator methionine" description="Removed" evidence="3">
    <location>
        <position position="1"/>
    </location>
</feature>
<feature type="chain" id="PRO_0000090119" description="Triosephosphate isomerase">
    <location>
        <begin position="2"/>
        <end position="249"/>
    </location>
</feature>
<feature type="active site" description="Electrophile" evidence="4">
    <location>
        <position position="96"/>
    </location>
</feature>
<feature type="active site" description="Proton acceptor" evidence="7">
    <location>
        <position position="166"/>
    </location>
</feature>
<feature type="binding site" evidence="4">
    <location>
        <position position="12"/>
    </location>
    <ligand>
        <name>substrate</name>
    </ligand>
</feature>
<feature type="binding site" evidence="4">
    <location>
        <position position="14"/>
    </location>
    <ligand>
        <name>substrate</name>
    </ligand>
</feature>
<feature type="modified residue" description="N6-acetyllysine" evidence="3">
    <location>
        <position position="14"/>
    </location>
</feature>
<feature type="modified residue" description="Deamidated asparagine" evidence="8">
    <location>
        <position position="16"/>
    </location>
</feature>
<feature type="modified residue" description="3'-nitrotyrosine" evidence="1">
    <location>
        <position position="68"/>
    </location>
</feature>
<feature type="modified residue" description="Deamidated asparagine" evidence="8">
    <location>
        <position position="72"/>
    </location>
</feature>
<feature type="modified residue" description="Phosphoserine" evidence="3">
    <location>
        <position position="80"/>
    </location>
</feature>
<feature type="modified residue" description="Phosphoserine" evidence="2">
    <location>
        <position position="106"/>
    </location>
</feature>
<feature type="modified residue" description="N6-succinyllysine" evidence="1">
    <location>
        <position position="149"/>
    </location>
</feature>
<feature type="modified residue" description="N6-acetyllysine; alternate" evidence="1">
    <location>
        <position position="156"/>
    </location>
</feature>
<feature type="modified residue" description="N6-succinyllysine; alternate" evidence="1">
    <location>
        <position position="156"/>
    </location>
</feature>
<feature type="modified residue" description="Phosphoserine" evidence="1">
    <location>
        <position position="159"/>
    </location>
</feature>
<feature type="modified residue" description="Phosphothreonine" evidence="1">
    <location>
        <position position="173"/>
    </location>
</feature>
<feature type="modified residue" description="N6-acetyllysine; alternate" evidence="3">
    <location>
        <position position="194"/>
    </location>
</feature>
<feature type="modified residue" description="N6-methyllysine; alternate" evidence="3">
    <location>
        <position position="194"/>
    </location>
</feature>
<feature type="modified residue" description="N6-succinyllysine; alternate" evidence="1">
    <location>
        <position position="194"/>
    </location>
</feature>
<feature type="modified residue" description="Phosphoserine" evidence="2">
    <location>
        <position position="198"/>
    </location>
</feature>
<feature type="modified residue" description="3'-nitrotyrosine" evidence="1">
    <location>
        <position position="209"/>
    </location>
</feature>
<feature type="modified residue" description="Phosphoserine" evidence="3">
    <location>
        <position position="212"/>
    </location>
</feature>
<feature type="modified residue" description="Phosphothreonine" evidence="3">
    <location>
        <position position="214"/>
    </location>
</feature>
<feature type="modified residue" description="Phosphoserine" evidence="3">
    <location>
        <position position="223"/>
    </location>
</feature>
<feature type="modified residue" description="N6-acetyllysine" evidence="3">
    <location>
        <position position="238"/>
    </location>
</feature>
<feature type="cross-link" description="Glycyl lysine isopeptide (Lys-Gly) (interchain with G-Cter in SUMO1)" evidence="3">
    <location>
        <position position="142"/>
    </location>
</feature>
<feature type="splice variant" id="VSP_060725" description="In isoform 2." evidence="9">
    <original>M</original>
    <variation>MAGTGQEAEFRFSAFYISRQRPQPRPHGGTDLQCAGPSAM</variation>
    <location>
        <position position="1"/>
    </location>
</feature>
<feature type="strand" evidence="11">
    <location>
        <begin position="7"/>
        <end position="12"/>
    </location>
</feature>
<feature type="helix" evidence="11">
    <location>
        <begin position="19"/>
        <end position="31"/>
    </location>
</feature>
<feature type="strand" evidence="11">
    <location>
        <begin position="38"/>
        <end position="43"/>
    </location>
</feature>
<feature type="helix" evidence="11">
    <location>
        <begin position="46"/>
        <end position="48"/>
    </location>
</feature>
<feature type="helix" evidence="11">
    <location>
        <begin position="49"/>
        <end position="55"/>
    </location>
</feature>
<feature type="strand" evidence="11">
    <location>
        <begin position="60"/>
        <end position="65"/>
    </location>
</feature>
<feature type="strand" evidence="11">
    <location>
        <begin position="69"/>
        <end position="74"/>
    </location>
</feature>
<feature type="helix" evidence="11">
    <location>
        <begin position="81"/>
        <end position="86"/>
    </location>
</feature>
<feature type="strand" evidence="11">
    <location>
        <begin position="91"/>
        <end position="95"/>
    </location>
</feature>
<feature type="helix" evidence="11">
    <location>
        <begin position="97"/>
        <end position="101"/>
    </location>
</feature>
<feature type="helix" evidence="11">
    <location>
        <begin position="107"/>
        <end position="119"/>
    </location>
</feature>
<feature type="strand" evidence="11">
    <location>
        <begin position="123"/>
        <end position="128"/>
    </location>
</feature>
<feature type="helix" evidence="11">
    <location>
        <begin position="132"/>
        <end position="136"/>
    </location>
</feature>
<feature type="helix" evidence="11">
    <location>
        <begin position="140"/>
        <end position="153"/>
    </location>
</feature>
<feature type="helix" evidence="11">
    <location>
        <begin position="158"/>
        <end position="160"/>
    </location>
</feature>
<feature type="strand" evidence="11">
    <location>
        <begin position="161"/>
        <end position="165"/>
    </location>
</feature>
<feature type="helix" evidence="11">
    <location>
        <begin position="168"/>
        <end position="170"/>
    </location>
</feature>
<feature type="strand" evidence="11">
    <location>
        <begin position="171"/>
        <end position="174"/>
    </location>
</feature>
<feature type="helix" evidence="11">
    <location>
        <begin position="179"/>
        <end position="196"/>
    </location>
</feature>
<feature type="helix" evidence="11">
    <location>
        <begin position="199"/>
        <end position="204"/>
    </location>
</feature>
<feature type="strand" evidence="11">
    <location>
        <begin position="207"/>
        <end position="209"/>
    </location>
</feature>
<feature type="turn" evidence="11">
    <location>
        <begin position="215"/>
        <end position="217"/>
    </location>
</feature>
<feature type="helix" evidence="11">
    <location>
        <begin position="218"/>
        <end position="222"/>
    </location>
</feature>
<feature type="strand" evidence="11">
    <location>
        <begin position="229"/>
        <end position="233"/>
    </location>
</feature>
<feature type="helix" evidence="11">
    <location>
        <begin position="234"/>
        <end position="237"/>
    </location>
</feature>
<feature type="helix" evidence="11">
    <location>
        <begin position="240"/>
        <end position="245"/>
    </location>
</feature>
<feature type="turn" evidence="12">
    <location>
        <begin position="246"/>
        <end position="248"/>
    </location>
</feature>